<protein>
    <recommendedName>
        <fullName evidence="1">Protein translocase subunit SecA 2</fullName>
        <ecNumber evidence="1">7.4.2.8</ecNumber>
    </recommendedName>
</protein>
<comment type="function">
    <text evidence="1">Part of the Sec protein translocase complex. Interacts with the SecYEG preprotein conducting channel. Has a central role in coupling the hydrolysis of ATP to the transfer of proteins into and across the cell membrane, serving as an ATP-driven molecular motor driving the stepwise translocation of polypeptide chains across the membrane.</text>
</comment>
<comment type="catalytic activity">
    <reaction evidence="1">
        <text>ATP + H2O + cellular proteinSide 1 = ADP + phosphate + cellular proteinSide 2.</text>
        <dbReference type="EC" id="7.4.2.8"/>
    </reaction>
</comment>
<comment type="subunit">
    <text evidence="1">Monomer and homodimer. Part of the essential Sec protein translocation apparatus which comprises SecA, SecYEG and auxiliary proteins SecDF. Other proteins may also be involved.</text>
</comment>
<comment type="subcellular location">
    <subcellularLocation>
        <location evidence="1">Cell membrane</location>
        <topology evidence="1">Peripheral membrane protein</topology>
        <orientation evidence="1">Cytoplasmic side</orientation>
    </subcellularLocation>
    <subcellularLocation>
        <location evidence="1">Cytoplasm</location>
    </subcellularLocation>
    <text evidence="1">Distribution is 50-50.</text>
</comment>
<comment type="similarity">
    <text evidence="1">Belongs to the SecA family.</text>
</comment>
<accession>Q7A366</accession>
<sequence length="796" mass="90930">MKHKLDVTINELRLKSIRKIVKRINTWSDEVKSYSDDALKQKTIEFKERLASGVDTLDTLLPEAYAVAREASWRVLGMYPKEVQLIGAIVLHEGNIAEMQTGEGKTLTATMPLYLNALSGKGTYLITTNDYLAKRDFEEMQPLYEWLGLTASLGFVDIVDYEYQKGEKRNIYEHDIIYTTNGRLGFDYLIDNLADSAEGKFLPQLNYGIIDEVDSIILDAAQTPLVISGAPRLQSNLFHIVKEFVDTLIEDVHFKMKKTKKEIWLLNQGIEAAQSYFNVEDLYSEQAMVLVRNINLALRAQYLFESNVDYFVYNGDIVLIDRITGRMLPGTKLQAGLHQAIEAKEGMEVSTDKSVMATITFQNLFKLFESFSGMTATGKLGESEFFDLYSKIVVQAPTDKAIQRIDEPDKVFRSVDEKNIAMIHDIVELHETGRPVLLITRTAEAAEYFSKVLFQMDIPNNLLIAQNVAKEAQMIAEAGQIGSMTVATSMAGRGTDIKLGEGVEALGGLAVIIHEHMENSRVDRQLRGRSGRQGDPGSSCIYISLDDYLVKRWSDSNLAENNQLYSLDAQRLSQSNLFNRKVKQIVVKAQRISEEQGVKAREMANEFEKSISIQRDLVYEERNRVLEIDDAENRDFKALAKDVFEMFVNEEKVLTKSRVVEYIYQNLSFQFNKDVACVNFKDKQAVVTFLLEQFEKQLALNRKNMQSAYYYNIFVQKVFLKAIDSCWLEQVDYLQQLKASVNQRQNGQRNAIFEYHRVALDSFEVMTRNIKKRMVKNICQSMITFDKEGMPVIHFP</sequence>
<name>SECA2_STAAN</name>
<evidence type="ECO:0000255" key="1">
    <source>
        <dbReference type="HAMAP-Rule" id="MF_01382"/>
    </source>
</evidence>
<keyword id="KW-0067">ATP-binding</keyword>
<keyword id="KW-1003">Cell membrane</keyword>
<keyword id="KW-0963">Cytoplasm</keyword>
<keyword id="KW-0472">Membrane</keyword>
<keyword id="KW-0547">Nucleotide-binding</keyword>
<keyword id="KW-0653">Protein transport</keyword>
<keyword id="KW-1278">Translocase</keyword>
<keyword id="KW-0811">Translocation</keyword>
<keyword id="KW-0813">Transport</keyword>
<dbReference type="EC" id="7.4.2.8" evidence="1"/>
<dbReference type="EMBL" id="BA000018">
    <property type="protein sequence ID" value="BAB43747.1"/>
    <property type="molecule type" value="Genomic_DNA"/>
</dbReference>
<dbReference type="PIR" id="A90073">
    <property type="entry name" value="A90073"/>
</dbReference>
<dbReference type="RefSeq" id="WP_000680945.1">
    <property type="nucleotide sequence ID" value="NC_002745.2"/>
</dbReference>
<dbReference type="SMR" id="Q7A366"/>
<dbReference type="EnsemblBacteria" id="BAB43747">
    <property type="protein sequence ID" value="BAB43747"/>
    <property type="gene ID" value="BAB43747"/>
</dbReference>
<dbReference type="KEGG" id="sau:SA2442"/>
<dbReference type="HOGENOM" id="CLU_005314_3_2_9"/>
<dbReference type="GO" id="GO:0031522">
    <property type="term" value="C:cell envelope Sec protein transport complex"/>
    <property type="evidence" value="ECO:0007669"/>
    <property type="project" value="TreeGrafter"/>
</dbReference>
<dbReference type="GO" id="GO:0005829">
    <property type="term" value="C:cytosol"/>
    <property type="evidence" value="ECO:0007669"/>
    <property type="project" value="TreeGrafter"/>
</dbReference>
<dbReference type="GO" id="GO:0005886">
    <property type="term" value="C:plasma membrane"/>
    <property type="evidence" value="ECO:0007669"/>
    <property type="project" value="UniProtKB-SubCell"/>
</dbReference>
<dbReference type="GO" id="GO:0005524">
    <property type="term" value="F:ATP binding"/>
    <property type="evidence" value="ECO:0007669"/>
    <property type="project" value="UniProtKB-UniRule"/>
</dbReference>
<dbReference type="GO" id="GO:0008564">
    <property type="term" value="F:protein-exporting ATPase activity"/>
    <property type="evidence" value="ECO:0007669"/>
    <property type="project" value="UniProtKB-EC"/>
</dbReference>
<dbReference type="GO" id="GO:0065002">
    <property type="term" value="P:intracellular protein transmembrane transport"/>
    <property type="evidence" value="ECO:0007669"/>
    <property type="project" value="UniProtKB-UniRule"/>
</dbReference>
<dbReference type="GO" id="GO:0017038">
    <property type="term" value="P:protein import"/>
    <property type="evidence" value="ECO:0007669"/>
    <property type="project" value="InterPro"/>
</dbReference>
<dbReference type="GO" id="GO:0006605">
    <property type="term" value="P:protein targeting"/>
    <property type="evidence" value="ECO:0007669"/>
    <property type="project" value="UniProtKB-UniRule"/>
</dbReference>
<dbReference type="GO" id="GO:0043952">
    <property type="term" value="P:protein transport by the Sec complex"/>
    <property type="evidence" value="ECO:0007669"/>
    <property type="project" value="TreeGrafter"/>
</dbReference>
<dbReference type="CDD" id="cd17928">
    <property type="entry name" value="DEXDc_SecA"/>
    <property type="match status" value="1"/>
</dbReference>
<dbReference type="CDD" id="cd18803">
    <property type="entry name" value="SF2_C_secA"/>
    <property type="match status" value="1"/>
</dbReference>
<dbReference type="FunFam" id="3.40.50.300:FF:000429">
    <property type="entry name" value="Preprotein translocase subunit SecA"/>
    <property type="match status" value="1"/>
</dbReference>
<dbReference type="FunFam" id="3.40.50.300:FF:001575">
    <property type="entry name" value="Protein translocase subunit SecA 2"/>
    <property type="match status" value="1"/>
</dbReference>
<dbReference type="Gene3D" id="1.10.3060.10">
    <property type="entry name" value="Helical scaffold and wing domains of SecA"/>
    <property type="match status" value="1"/>
</dbReference>
<dbReference type="Gene3D" id="3.40.50.300">
    <property type="entry name" value="P-loop containing nucleotide triphosphate hydrolases"/>
    <property type="match status" value="2"/>
</dbReference>
<dbReference type="Gene3D" id="3.90.1440.10">
    <property type="entry name" value="SecA, preprotein cross-linking domain"/>
    <property type="match status" value="1"/>
</dbReference>
<dbReference type="HAMAP" id="MF_01382">
    <property type="entry name" value="SecA"/>
    <property type="match status" value="1"/>
</dbReference>
<dbReference type="InterPro" id="IPR014001">
    <property type="entry name" value="Helicase_ATP-bd"/>
</dbReference>
<dbReference type="InterPro" id="IPR001650">
    <property type="entry name" value="Helicase_C-like"/>
</dbReference>
<dbReference type="InterPro" id="IPR027417">
    <property type="entry name" value="P-loop_NTPase"/>
</dbReference>
<dbReference type="InterPro" id="IPR000185">
    <property type="entry name" value="SecA"/>
</dbReference>
<dbReference type="InterPro" id="IPR022490">
    <property type="entry name" value="SecA2"/>
</dbReference>
<dbReference type="InterPro" id="IPR011115">
    <property type="entry name" value="SecA_DEAD"/>
</dbReference>
<dbReference type="InterPro" id="IPR014018">
    <property type="entry name" value="SecA_motor_DEAD"/>
</dbReference>
<dbReference type="InterPro" id="IPR011130">
    <property type="entry name" value="SecA_preprotein_X-link_dom"/>
</dbReference>
<dbReference type="InterPro" id="IPR044722">
    <property type="entry name" value="SecA_SF2_C"/>
</dbReference>
<dbReference type="InterPro" id="IPR011116">
    <property type="entry name" value="SecA_Wing/Scaffold"/>
</dbReference>
<dbReference type="InterPro" id="IPR036266">
    <property type="entry name" value="SecA_Wing/Scaffold_sf"/>
</dbReference>
<dbReference type="InterPro" id="IPR036670">
    <property type="entry name" value="SecA_X-link_sf"/>
</dbReference>
<dbReference type="NCBIfam" id="NF006630">
    <property type="entry name" value="PRK09200.1"/>
    <property type="match status" value="1"/>
</dbReference>
<dbReference type="NCBIfam" id="TIGR03714">
    <property type="entry name" value="secA2"/>
    <property type="match status" value="1"/>
</dbReference>
<dbReference type="PANTHER" id="PTHR30612:SF0">
    <property type="entry name" value="CHLOROPLAST PROTEIN-TRANSPORTING ATPASE"/>
    <property type="match status" value="1"/>
</dbReference>
<dbReference type="PANTHER" id="PTHR30612">
    <property type="entry name" value="SECA INNER MEMBRANE COMPONENT OF SEC PROTEIN SECRETION SYSTEM"/>
    <property type="match status" value="1"/>
</dbReference>
<dbReference type="Pfam" id="PF21090">
    <property type="entry name" value="P-loop_SecA"/>
    <property type="match status" value="1"/>
</dbReference>
<dbReference type="Pfam" id="PF07517">
    <property type="entry name" value="SecA_DEAD"/>
    <property type="match status" value="1"/>
</dbReference>
<dbReference type="Pfam" id="PF01043">
    <property type="entry name" value="SecA_PP_bind"/>
    <property type="match status" value="1"/>
</dbReference>
<dbReference type="Pfam" id="PF07516">
    <property type="entry name" value="SecA_SW"/>
    <property type="match status" value="1"/>
</dbReference>
<dbReference type="PRINTS" id="PR00906">
    <property type="entry name" value="SECA"/>
</dbReference>
<dbReference type="SMART" id="SM00957">
    <property type="entry name" value="SecA_DEAD"/>
    <property type="match status" value="1"/>
</dbReference>
<dbReference type="SMART" id="SM00958">
    <property type="entry name" value="SecA_PP_bind"/>
    <property type="match status" value="1"/>
</dbReference>
<dbReference type="SUPFAM" id="SSF81886">
    <property type="entry name" value="Helical scaffold and wing domains of SecA"/>
    <property type="match status" value="1"/>
</dbReference>
<dbReference type="SUPFAM" id="SSF52540">
    <property type="entry name" value="P-loop containing nucleoside triphosphate hydrolases"/>
    <property type="match status" value="2"/>
</dbReference>
<dbReference type="SUPFAM" id="SSF81767">
    <property type="entry name" value="Pre-protein crosslinking domain of SecA"/>
    <property type="match status" value="1"/>
</dbReference>
<dbReference type="PROSITE" id="PS51196">
    <property type="entry name" value="SECA_MOTOR_DEAD"/>
    <property type="match status" value="1"/>
</dbReference>
<proteinExistence type="inferred from homology"/>
<gene>
    <name evidence="1" type="primary">secA2</name>
    <name type="ordered locus">SA2442</name>
</gene>
<feature type="chain" id="PRO_0000318429" description="Protein translocase subunit SecA 2">
    <location>
        <begin position="1"/>
        <end position="796"/>
    </location>
</feature>
<feature type="binding site" evidence="1">
    <location>
        <position position="84"/>
    </location>
    <ligand>
        <name>ATP</name>
        <dbReference type="ChEBI" id="CHEBI:30616"/>
    </ligand>
</feature>
<feature type="binding site" evidence="1">
    <location>
        <begin position="102"/>
        <end position="106"/>
    </location>
    <ligand>
        <name>ATP</name>
        <dbReference type="ChEBI" id="CHEBI:30616"/>
    </ligand>
</feature>
<feature type="binding site" evidence="1">
    <location>
        <position position="496"/>
    </location>
    <ligand>
        <name>ATP</name>
        <dbReference type="ChEBI" id="CHEBI:30616"/>
    </ligand>
</feature>
<reference key="1">
    <citation type="journal article" date="2001" name="Lancet">
        <title>Whole genome sequencing of meticillin-resistant Staphylococcus aureus.</title>
        <authorList>
            <person name="Kuroda M."/>
            <person name="Ohta T."/>
            <person name="Uchiyama I."/>
            <person name="Baba T."/>
            <person name="Yuzawa H."/>
            <person name="Kobayashi I."/>
            <person name="Cui L."/>
            <person name="Oguchi A."/>
            <person name="Aoki K."/>
            <person name="Nagai Y."/>
            <person name="Lian J.-Q."/>
            <person name="Ito T."/>
            <person name="Kanamori M."/>
            <person name="Matsumaru H."/>
            <person name="Maruyama A."/>
            <person name="Murakami H."/>
            <person name="Hosoyama A."/>
            <person name="Mizutani-Ui Y."/>
            <person name="Takahashi N.K."/>
            <person name="Sawano T."/>
            <person name="Inoue R."/>
            <person name="Kaito C."/>
            <person name="Sekimizu K."/>
            <person name="Hirakawa H."/>
            <person name="Kuhara S."/>
            <person name="Goto S."/>
            <person name="Yabuzaki J."/>
            <person name="Kanehisa M."/>
            <person name="Yamashita A."/>
            <person name="Oshima K."/>
            <person name="Furuya K."/>
            <person name="Yoshino C."/>
            <person name="Shiba T."/>
            <person name="Hattori M."/>
            <person name="Ogasawara N."/>
            <person name="Hayashi H."/>
            <person name="Hiramatsu K."/>
        </authorList>
    </citation>
    <scope>NUCLEOTIDE SEQUENCE [LARGE SCALE GENOMIC DNA]</scope>
    <source>
        <strain>N315</strain>
    </source>
</reference>
<organism>
    <name type="scientific">Staphylococcus aureus (strain N315)</name>
    <dbReference type="NCBI Taxonomy" id="158879"/>
    <lineage>
        <taxon>Bacteria</taxon>
        <taxon>Bacillati</taxon>
        <taxon>Bacillota</taxon>
        <taxon>Bacilli</taxon>
        <taxon>Bacillales</taxon>
        <taxon>Staphylococcaceae</taxon>
        <taxon>Staphylococcus</taxon>
    </lineage>
</organism>